<organism>
    <name type="scientific">Mus musculus</name>
    <name type="common">Mouse</name>
    <dbReference type="NCBI Taxonomy" id="10090"/>
    <lineage>
        <taxon>Eukaryota</taxon>
        <taxon>Metazoa</taxon>
        <taxon>Chordata</taxon>
        <taxon>Craniata</taxon>
        <taxon>Vertebrata</taxon>
        <taxon>Euteleostomi</taxon>
        <taxon>Mammalia</taxon>
        <taxon>Eutheria</taxon>
        <taxon>Euarchontoglires</taxon>
        <taxon>Glires</taxon>
        <taxon>Rodentia</taxon>
        <taxon>Myomorpha</taxon>
        <taxon>Muroidea</taxon>
        <taxon>Muridae</taxon>
        <taxon>Murinae</taxon>
        <taxon>Mus</taxon>
        <taxon>Mus</taxon>
    </lineage>
</organism>
<name>TSP50_MOUSE</name>
<keyword id="KW-1015">Disulfide bond</keyword>
<keyword id="KW-0325">Glycoprotein</keyword>
<keyword id="KW-0378">Hydrolase</keyword>
<keyword id="KW-0472">Membrane</keyword>
<keyword id="KW-0645">Protease</keyword>
<keyword id="KW-1185">Reference proteome</keyword>
<keyword id="KW-0732">Signal</keyword>
<keyword id="KW-0888">Threonine protease</keyword>
<keyword id="KW-0812">Transmembrane</keyword>
<keyword id="KW-1133">Transmembrane helix</keyword>
<dbReference type="EC" id="3.4.25.-" evidence="2"/>
<dbReference type="EMBL" id="AF481144">
    <property type="protein sequence ID" value="AAM89223.1"/>
    <property type="molecule type" value="mRNA"/>
</dbReference>
<dbReference type="EMBL" id="AK045168">
    <property type="protein sequence ID" value="BAC32245.1"/>
    <property type="molecule type" value="mRNA"/>
</dbReference>
<dbReference type="EMBL" id="AC139378">
    <property type="status" value="NOT_ANNOTATED_CDS"/>
    <property type="molecule type" value="Genomic_DNA"/>
</dbReference>
<dbReference type="EMBL" id="BC150686">
    <property type="protein sequence ID" value="AAI50687.1"/>
    <property type="molecule type" value="mRNA"/>
</dbReference>
<dbReference type="CCDS" id="CCDS23577.1"/>
<dbReference type="RefSeq" id="NP_666339.2">
    <property type="nucleotide sequence ID" value="NM_146227.4"/>
</dbReference>
<dbReference type="SMR" id="Q8BLH5"/>
<dbReference type="BioGRID" id="231698">
    <property type="interactions" value="1"/>
</dbReference>
<dbReference type="FunCoup" id="Q8BLH5">
    <property type="interactions" value="102"/>
</dbReference>
<dbReference type="STRING" id="10090.ENSMUSP00000059668"/>
<dbReference type="MEROPS" id="S01.993"/>
<dbReference type="GlyCosmos" id="Q8BLH5">
    <property type="glycosylation" value="3 sites, No reported glycans"/>
</dbReference>
<dbReference type="GlyGen" id="Q8BLH5">
    <property type="glycosylation" value="3 sites, 1 N-linked glycan (1 site)"/>
</dbReference>
<dbReference type="PhosphoSitePlus" id="Q8BLH5"/>
<dbReference type="SwissPalm" id="Q8BLH5"/>
<dbReference type="PaxDb" id="10090-ENSMUSP00000059668"/>
<dbReference type="ProteomicsDB" id="297999"/>
<dbReference type="DNASU" id="235631"/>
<dbReference type="Ensembl" id="ENSMUST00000051097.6">
    <property type="protein sequence ID" value="ENSMUSP00000059668.2"/>
    <property type="gene ID" value="ENSMUSG00000048752.8"/>
</dbReference>
<dbReference type="GeneID" id="235631"/>
<dbReference type="KEGG" id="mmu:235631"/>
<dbReference type="UCSC" id="uc009rva.1">
    <property type="organism name" value="mouse"/>
</dbReference>
<dbReference type="AGR" id="MGI:2447303"/>
<dbReference type="CTD" id="29122"/>
<dbReference type="MGI" id="MGI:2447303">
    <property type="gene designation" value="Prss50"/>
</dbReference>
<dbReference type="VEuPathDB" id="HostDB:ENSMUSG00000048752"/>
<dbReference type="eggNOG" id="KOG3627">
    <property type="taxonomic scope" value="Eukaryota"/>
</dbReference>
<dbReference type="GeneTree" id="ENSGT00940000162593"/>
<dbReference type="HOGENOM" id="CLU_006842_0_4_1"/>
<dbReference type="InParanoid" id="Q8BLH5"/>
<dbReference type="OMA" id="GMVSWGP"/>
<dbReference type="OrthoDB" id="9448935at2759"/>
<dbReference type="PhylomeDB" id="Q8BLH5"/>
<dbReference type="TreeFam" id="TF351676"/>
<dbReference type="BioGRID-ORCS" id="235631">
    <property type="hits" value="2 hits in 79 CRISPR screens"/>
</dbReference>
<dbReference type="PRO" id="PR:Q8BLH5"/>
<dbReference type="Proteomes" id="UP000000589">
    <property type="component" value="Chromosome 9"/>
</dbReference>
<dbReference type="RNAct" id="Q8BLH5">
    <property type="molecule type" value="protein"/>
</dbReference>
<dbReference type="Bgee" id="ENSMUSG00000048752">
    <property type="expression patterns" value="Expressed in spermatid and 23 other cell types or tissues"/>
</dbReference>
<dbReference type="ExpressionAtlas" id="Q8BLH5">
    <property type="expression patterns" value="baseline and differential"/>
</dbReference>
<dbReference type="GO" id="GO:0005783">
    <property type="term" value="C:endoplasmic reticulum"/>
    <property type="evidence" value="ECO:0007669"/>
    <property type="project" value="Ensembl"/>
</dbReference>
<dbReference type="GO" id="GO:0016020">
    <property type="term" value="C:membrane"/>
    <property type="evidence" value="ECO:0007669"/>
    <property type="project" value="UniProtKB-SubCell"/>
</dbReference>
<dbReference type="GO" id="GO:0004252">
    <property type="term" value="F:serine-type endopeptidase activity"/>
    <property type="evidence" value="ECO:0007669"/>
    <property type="project" value="InterPro"/>
</dbReference>
<dbReference type="GO" id="GO:0004298">
    <property type="term" value="F:threonine-type endopeptidase activity"/>
    <property type="evidence" value="ECO:0007669"/>
    <property type="project" value="UniProtKB-KW"/>
</dbReference>
<dbReference type="GO" id="GO:0006508">
    <property type="term" value="P:proteolysis"/>
    <property type="evidence" value="ECO:0007669"/>
    <property type="project" value="UniProtKB-KW"/>
</dbReference>
<dbReference type="CDD" id="cd00190">
    <property type="entry name" value="Tryp_SPc"/>
    <property type="match status" value="1"/>
</dbReference>
<dbReference type="FunFam" id="2.40.10.10:FF:000106">
    <property type="entry name" value="Probable threonine protease PRSS50"/>
    <property type="match status" value="1"/>
</dbReference>
<dbReference type="FunFam" id="2.40.10.10:FF:000127">
    <property type="entry name" value="Probable threonine protease PRSS50"/>
    <property type="match status" value="1"/>
</dbReference>
<dbReference type="Gene3D" id="2.40.10.10">
    <property type="entry name" value="Trypsin-like serine proteases"/>
    <property type="match status" value="1"/>
</dbReference>
<dbReference type="InterPro" id="IPR009003">
    <property type="entry name" value="Peptidase_S1_PA"/>
</dbReference>
<dbReference type="InterPro" id="IPR043504">
    <property type="entry name" value="Peptidase_S1_PA_chymotrypsin"/>
</dbReference>
<dbReference type="InterPro" id="IPR001314">
    <property type="entry name" value="Peptidase_S1A"/>
</dbReference>
<dbReference type="InterPro" id="IPR001254">
    <property type="entry name" value="Trypsin_dom"/>
</dbReference>
<dbReference type="PANTHER" id="PTHR24253:SF35">
    <property type="entry name" value="THREONINE PROTEASE PRSS50-RELATED"/>
    <property type="match status" value="1"/>
</dbReference>
<dbReference type="PANTHER" id="PTHR24253">
    <property type="entry name" value="TRANSMEMBRANE PROTEASE SERINE"/>
    <property type="match status" value="1"/>
</dbReference>
<dbReference type="Pfam" id="PF00089">
    <property type="entry name" value="Trypsin"/>
    <property type="match status" value="1"/>
</dbReference>
<dbReference type="PRINTS" id="PR00722">
    <property type="entry name" value="CHYMOTRYPSIN"/>
</dbReference>
<dbReference type="SMART" id="SM00020">
    <property type="entry name" value="Tryp_SPc"/>
    <property type="match status" value="1"/>
</dbReference>
<dbReference type="SUPFAM" id="SSF50494">
    <property type="entry name" value="Trypsin-like serine proteases"/>
    <property type="match status" value="1"/>
</dbReference>
<dbReference type="PROSITE" id="PS50240">
    <property type="entry name" value="TRYPSIN_DOM"/>
    <property type="match status" value="1"/>
</dbReference>
<protein>
    <recommendedName>
        <fullName>Probable threonine protease PRSS50</fullName>
        <ecNumber evidence="2">3.4.25.-</ecNumber>
    </recommendedName>
    <alternativeName>
        <fullName>Serine protease 50</fullName>
    </alternativeName>
    <alternativeName>
        <fullName>Testis-specific protease-like protein 50</fullName>
    </alternativeName>
</protein>
<feature type="signal peptide" evidence="3">
    <location>
        <begin position="1"/>
        <end position="47"/>
    </location>
</feature>
<feature type="chain" id="PRO_0000415813" description="Probable threonine protease PRSS50">
    <location>
        <begin position="48"/>
        <end position="439"/>
    </location>
</feature>
<feature type="topological domain" description="Extracellular" evidence="3">
    <location>
        <begin position="48"/>
        <end position="415"/>
    </location>
</feature>
<feature type="transmembrane region" description="Helical" evidence="3">
    <location>
        <begin position="416"/>
        <end position="436"/>
    </location>
</feature>
<feature type="topological domain" description="Cytoplasmic" evidence="3">
    <location>
        <begin position="437"/>
        <end position="439"/>
    </location>
</feature>
<feature type="domain" description="Peptidase S1" evidence="4">
    <location>
        <begin position="157"/>
        <end position="412"/>
    </location>
</feature>
<feature type="region of interest" description="Disordered" evidence="5">
    <location>
        <begin position="1"/>
        <end position="22"/>
    </location>
</feature>
<feature type="region of interest" description="Disordered" evidence="5">
    <location>
        <begin position="48"/>
        <end position="130"/>
    </location>
</feature>
<feature type="compositionally biased region" description="Low complexity" evidence="5">
    <location>
        <begin position="9"/>
        <end position="21"/>
    </location>
</feature>
<feature type="compositionally biased region" description="Basic residues" evidence="5">
    <location>
        <begin position="51"/>
        <end position="61"/>
    </location>
</feature>
<feature type="compositionally biased region" description="Low complexity" evidence="5">
    <location>
        <begin position="112"/>
        <end position="127"/>
    </location>
</feature>
<feature type="active site" description="Charge relay system" evidence="4">
    <location>
        <position position="207"/>
    </location>
</feature>
<feature type="active site" description="Charge relay system" evidence="4">
    <location>
        <position position="260"/>
    </location>
</feature>
<feature type="active site" description="Charge relay system" evidence="4">
    <location>
        <position position="364"/>
    </location>
</feature>
<feature type="glycosylation site" description="N-linked (GlcNAc...) asparagine" evidence="3">
    <location>
        <position position="116"/>
    </location>
</feature>
<feature type="glycosylation site" description="N-linked (GlcNAc...) asparagine" evidence="3">
    <location>
        <position position="187"/>
    </location>
</feature>
<feature type="glycosylation site" description="N-linked (GlcNAc...) asparagine" evidence="3">
    <location>
        <position position="226"/>
    </location>
</feature>
<feature type="disulfide bond" evidence="4">
    <location>
        <begin position="192"/>
        <end position="208"/>
    </location>
</feature>
<feature type="disulfide bond" evidence="4">
    <location>
        <begin position="294"/>
        <end position="370"/>
    </location>
</feature>
<feature type="disulfide bond" evidence="4">
    <location>
        <begin position="327"/>
        <end position="350"/>
    </location>
</feature>
<feature type="disulfide bond" evidence="4">
    <location>
        <begin position="360"/>
        <end position="388"/>
    </location>
</feature>
<feature type="sequence conflict" description="In Ref. 4; AAI50687." evidence="6" ref="4">
    <original>W</original>
    <variation>S</variation>
    <location>
        <position position="68"/>
    </location>
</feature>
<feature type="sequence conflict" description="In Ref. 4; AAI50687." evidence="6" ref="4">
    <original>G</original>
    <variation>S</variation>
    <location>
        <position position="105"/>
    </location>
</feature>
<feature type="sequence conflict" description="In Ref. 1; AAM89223." evidence="6" ref="1">
    <original>WMVSVQAN</original>
    <variation>GWSACRLH</variation>
    <location>
        <begin position="180"/>
        <end position="187"/>
    </location>
</feature>
<feature type="sequence conflict" description="In Ref. 4; AAI50687." evidence="6" ref="4">
    <original>I</original>
    <variation>V</variation>
    <location>
        <position position="191"/>
    </location>
</feature>
<reference key="1">
    <citation type="journal article" date="2002" name="Hum. Mol. Genet.">
        <title>Mutation of the novel gene Tmie results in sensory cell defects in the inner ear of spinner, a mouse model of human hearing loss DFNB6.</title>
        <authorList>
            <person name="Mitchem K.L."/>
            <person name="Hibbard E."/>
            <person name="Beyer L.A."/>
            <person name="Bosom K."/>
            <person name="Dootz G.A."/>
            <person name="Dolan D.F."/>
            <person name="Johnson K.R."/>
            <person name="Raphael Y."/>
            <person name="Kohrman D.C."/>
        </authorList>
    </citation>
    <scope>NUCLEOTIDE SEQUENCE [MRNA]</scope>
    <source>
        <strain>C57BL/6J</strain>
    </source>
</reference>
<reference key="2">
    <citation type="journal article" date="2005" name="Science">
        <title>The transcriptional landscape of the mammalian genome.</title>
        <authorList>
            <person name="Carninci P."/>
            <person name="Kasukawa T."/>
            <person name="Katayama S."/>
            <person name="Gough J."/>
            <person name="Frith M.C."/>
            <person name="Maeda N."/>
            <person name="Oyama R."/>
            <person name="Ravasi T."/>
            <person name="Lenhard B."/>
            <person name="Wells C."/>
            <person name="Kodzius R."/>
            <person name="Shimokawa K."/>
            <person name="Bajic V.B."/>
            <person name="Brenner S.E."/>
            <person name="Batalov S."/>
            <person name="Forrest A.R."/>
            <person name="Zavolan M."/>
            <person name="Davis M.J."/>
            <person name="Wilming L.G."/>
            <person name="Aidinis V."/>
            <person name="Allen J.E."/>
            <person name="Ambesi-Impiombato A."/>
            <person name="Apweiler R."/>
            <person name="Aturaliya R.N."/>
            <person name="Bailey T.L."/>
            <person name="Bansal M."/>
            <person name="Baxter L."/>
            <person name="Beisel K.W."/>
            <person name="Bersano T."/>
            <person name="Bono H."/>
            <person name="Chalk A.M."/>
            <person name="Chiu K.P."/>
            <person name="Choudhary V."/>
            <person name="Christoffels A."/>
            <person name="Clutterbuck D.R."/>
            <person name="Crowe M.L."/>
            <person name="Dalla E."/>
            <person name="Dalrymple B.P."/>
            <person name="de Bono B."/>
            <person name="Della Gatta G."/>
            <person name="di Bernardo D."/>
            <person name="Down T."/>
            <person name="Engstrom P."/>
            <person name="Fagiolini M."/>
            <person name="Faulkner G."/>
            <person name="Fletcher C.F."/>
            <person name="Fukushima T."/>
            <person name="Furuno M."/>
            <person name="Futaki S."/>
            <person name="Gariboldi M."/>
            <person name="Georgii-Hemming P."/>
            <person name="Gingeras T.R."/>
            <person name="Gojobori T."/>
            <person name="Green R.E."/>
            <person name="Gustincich S."/>
            <person name="Harbers M."/>
            <person name="Hayashi Y."/>
            <person name="Hensch T.K."/>
            <person name="Hirokawa N."/>
            <person name="Hill D."/>
            <person name="Huminiecki L."/>
            <person name="Iacono M."/>
            <person name="Ikeo K."/>
            <person name="Iwama A."/>
            <person name="Ishikawa T."/>
            <person name="Jakt M."/>
            <person name="Kanapin A."/>
            <person name="Katoh M."/>
            <person name="Kawasawa Y."/>
            <person name="Kelso J."/>
            <person name="Kitamura H."/>
            <person name="Kitano H."/>
            <person name="Kollias G."/>
            <person name="Krishnan S.P."/>
            <person name="Kruger A."/>
            <person name="Kummerfeld S.K."/>
            <person name="Kurochkin I.V."/>
            <person name="Lareau L.F."/>
            <person name="Lazarevic D."/>
            <person name="Lipovich L."/>
            <person name="Liu J."/>
            <person name="Liuni S."/>
            <person name="McWilliam S."/>
            <person name="Madan Babu M."/>
            <person name="Madera M."/>
            <person name="Marchionni L."/>
            <person name="Matsuda H."/>
            <person name="Matsuzawa S."/>
            <person name="Miki H."/>
            <person name="Mignone F."/>
            <person name="Miyake S."/>
            <person name="Morris K."/>
            <person name="Mottagui-Tabar S."/>
            <person name="Mulder N."/>
            <person name="Nakano N."/>
            <person name="Nakauchi H."/>
            <person name="Ng P."/>
            <person name="Nilsson R."/>
            <person name="Nishiguchi S."/>
            <person name="Nishikawa S."/>
            <person name="Nori F."/>
            <person name="Ohara O."/>
            <person name="Okazaki Y."/>
            <person name="Orlando V."/>
            <person name="Pang K.C."/>
            <person name="Pavan W.J."/>
            <person name="Pavesi G."/>
            <person name="Pesole G."/>
            <person name="Petrovsky N."/>
            <person name="Piazza S."/>
            <person name="Reed J."/>
            <person name="Reid J.F."/>
            <person name="Ring B.Z."/>
            <person name="Ringwald M."/>
            <person name="Rost B."/>
            <person name="Ruan Y."/>
            <person name="Salzberg S.L."/>
            <person name="Sandelin A."/>
            <person name="Schneider C."/>
            <person name="Schoenbach C."/>
            <person name="Sekiguchi K."/>
            <person name="Semple C.A."/>
            <person name="Seno S."/>
            <person name="Sessa L."/>
            <person name="Sheng Y."/>
            <person name="Shibata Y."/>
            <person name="Shimada H."/>
            <person name="Shimada K."/>
            <person name="Silva D."/>
            <person name="Sinclair B."/>
            <person name="Sperling S."/>
            <person name="Stupka E."/>
            <person name="Sugiura K."/>
            <person name="Sultana R."/>
            <person name="Takenaka Y."/>
            <person name="Taki K."/>
            <person name="Tammoja K."/>
            <person name="Tan S.L."/>
            <person name="Tang S."/>
            <person name="Taylor M.S."/>
            <person name="Tegner J."/>
            <person name="Teichmann S.A."/>
            <person name="Ueda H.R."/>
            <person name="van Nimwegen E."/>
            <person name="Verardo R."/>
            <person name="Wei C.L."/>
            <person name="Yagi K."/>
            <person name="Yamanishi H."/>
            <person name="Zabarovsky E."/>
            <person name="Zhu S."/>
            <person name="Zimmer A."/>
            <person name="Hide W."/>
            <person name="Bult C."/>
            <person name="Grimmond S.M."/>
            <person name="Teasdale R.D."/>
            <person name="Liu E.T."/>
            <person name="Brusic V."/>
            <person name="Quackenbush J."/>
            <person name="Wahlestedt C."/>
            <person name="Mattick J.S."/>
            <person name="Hume D.A."/>
            <person name="Kai C."/>
            <person name="Sasaki D."/>
            <person name="Tomaru Y."/>
            <person name="Fukuda S."/>
            <person name="Kanamori-Katayama M."/>
            <person name="Suzuki M."/>
            <person name="Aoki J."/>
            <person name="Arakawa T."/>
            <person name="Iida J."/>
            <person name="Imamura K."/>
            <person name="Itoh M."/>
            <person name="Kato T."/>
            <person name="Kawaji H."/>
            <person name="Kawagashira N."/>
            <person name="Kawashima T."/>
            <person name="Kojima M."/>
            <person name="Kondo S."/>
            <person name="Konno H."/>
            <person name="Nakano K."/>
            <person name="Ninomiya N."/>
            <person name="Nishio T."/>
            <person name="Okada M."/>
            <person name="Plessy C."/>
            <person name="Shibata K."/>
            <person name="Shiraki T."/>
            <person name="Suzuki S."/>
            <person name="Tagami M."/>
            <person name="Waki K."/>
            <person name="Watahiki A."/>
            <person name="Okamura-Oho Y."/>
            <person name="Suzuki H."/>
            <person name="Kawai J."/>
            <person name="Hayashizaki Y."/>
        </authorList>
    </citation>
    <scope>NUCLEOTIDE SEQUENCE [LARGE SCALE MRNA]</scope>
    <source>
        <strain>C57BL/6J</strain>
        <tissue>Embryo</tissue>
    </source>
</reference>
<reference key="3">
    <citation type="journal article" date="2009" name="PLoS Biol.">
        <title>Lineage-specific biology revealed by a finished genome assembly of the mouse.</title>
        <authorList>
            <person name="Church D.M."/>
            <person name="Goodstadt L."/>
            <person name="Hillier L.W."/>
            <person name="Zody M.C."/>
            <person name="Goldstein S."/>
            <person name="She X."/>
            <person name="Bult C.J."/>
            <person name="Agarwala R."/>
            <person name="Cherry J.L."/>
            <person name="DiCuccio M."/>
            <person name="Hlavina W."/>
            <person name="Kapustin Y."/>
            <person name="Meric P."/>
            <person name="Maglott D."/>
            <person name="Birtle Z."/>
            <person name="Marques A.C."/>
            <person name="Graves T."/>
            <person name="Zhou S."/>
            <person name="Teague B."/>
            <person name="Potamousis K."/>
            <person name="Churas C."/>
            <person name="Place M."/>
            <person name="Herschleb J."/>
            <person name="Runnheim R."/>
            <person name="Forrest D."/>
            <person name="Amos-Landgraf J."/>
            <person name="Schwartz D.C."/>
            <person name="Cheng Z."/>
            <person name="Lindblad-Toh K."/>
            <person name="Eichler E.E."/>
            <person name="Ponting C.P."/>
        </authorList>
    </citation>
    <scope>NUCLEOTIDE SEQUENCE [LARGE SCALE GENOMIC DNA]</scope>
    <source>
        <strain>C57BL/6J</strain>
    </source>
</reference>
<reference key="4">
    <citation type="journal article" date="2004" name="Genome Res.">
        <title>The status, quality, and expansion of the NIH full-length cDNA project: the Mammalian Gene Collection (MGC).</title>
        <authorList>
            <consortium name="The MGC Project Team"/>
        </authorList>
    </citation>
    <scope>NUCLEOTIDE SEQUENCE [LARGE SCALE MRNA]</scope>
    <source>
        <tissue>Brain</tissue>
    </source>
</reference>
<reference key="5">
    <citation type="journal article" date="2010" name="Cell">
        <title>A tissue-specific atlas of mouse protein phosphorylation and expression.</title>
        <authorList>
            <person name="Huttlin E.L."/>
            <person name="Jedrychowski M.P."/>
            <person name="Elias J.E."/>
            <person name="Goswami T."/>
            <person name="Rad R."/>
            <person name="Beausoleil S.A."/>
            <person name="Villen J."/>
            <person name="Haas W."/>
            <person name="Sowa M.E."/>
            <person name="Gygi S.P."/>
        </authorList>
    </citation>
    <scope>IDENTIFICATION BY MASS SPECTROMETRY [LARGE SCALE ANALYSIS]</scope>
    <source>
        <tissue>Testis</tissue>
    </source>
</reference>
<comment type="function">
    <text evidence="1">May be involved in proteolysis through its threonine endopeptidase activity.</text>
</comment>
<comment type="subcellular location">
    <subcellularLocation>
        <location evidence="6">Membrane</location>
        <topology evidence="6">Single-pass type I membrane protein</topology>
    </subcellularLocation>
</comment>
<comment type="similarity">
    <text evidence="4">Belongs to the peptidase S1 family.</text>
</comment>
<comment type="caution">
    <text evidence="6">Although related to peptidase S1 family, lacks the conserved active Ser residue in position 364 which is replaced by a Thr.</text>
</comment>
<accession>Q8BLH5</accession>
<accession>B2RWS9</accession>
<accession>Q8K466</accession>
<evidence type="ECO:0000250" key="1"/>
<evidence type="ECO:0000250" key="2">
    <source>
        <dbReference type="UniProtKB" id="Q9UI38"/>
    </source>
</evidence>
<evidence type="ECO:0000255" key="3"/>
<evidence type="ECO:0000255" key="4">
    <source>
        <dbReference type="PROSITE-ProRule" id="PRU00274"/>
    </source>
</evidence>
<evidence type="ECO:0000256" key="5">
    <source>
        <dbReference type="SAM" id="MobiDB-lite"/>
    </source>
</evidence>
<evidence type="ECO:0000305" key="6"/>
<sequence length="439" mass="48676">MEPWCGAEVRGQGPQGPRVPGASRSRSRALLLLLLLLLLLLPRRPAGERIRPRRPPRHAHPRPPLTRWRPSTGYLAAGASPGTLSTTVPTGPGVSCGSRGICPSGRLRLPRQAQTNQTTTAPPNSQTMAPLKTVGTLGMMDTTGSVLKTVHSSNLPFCGSSHEPDPTLRDPEAMTRRWPWMVSVQANGSHICAGILIASQWVLTVAHCLSQNHVNYIVRAGSPWINQTAGTSSDVPVHRVIINHGYQPRRYWSWVGRAHDIGLLKLKWGLKYSKYVWPICLPGLDYVVEDSSLCTVTGWGYPRANGIWPQFQSLQEKEVSILNSKKCDHFYHKFSRISSLVRIINPQMICASDNNREEFCYEITGEPLVCSSDGTWYLVGMMSWGPGCKKSEAPPIFLQVSYYRPWIWDRLSGEPLALPAPSRTLLLAFLLLLILLGTL</sequence>
<gene>
    <name type="primary">Prss50</name>
    <name type="synonym">Tsp50</name>
</gene>
<proteinExistence type="evidence at protein level"/>